<dbReference type="EC" id="2.8.1.-" evidence="1"/>
<dbReference type="EMBL" id="CP001396">
    <property type="protein sequence ID" value="ACR64590.1"/>
    <property type="molecule type" value="Genomic_DNA"/>
</dbReference>
<dbReference type="RefSeq" id="WP_001209680.1">
    <property type="nucleotide sequence ID" value="NC_012759.1"/>
</dbReference>
<dbReference type="SMR" id="C4ZUK0"/>
<dbReference type="KEGG" id="ebw:BWG_3036"/>
<dbReference type="HOGENOM" id="CLU_132095_0_0_6"/>
<dbReference type="GO" id="GO:1990228">
    <property type="term" value="C:sulfurtransferase complex"/>
    <property type="evidence" value="ECO:0007669"/>
    <property type="project" value="TreeGrafter"/>
</dbReference>
<dbReference type="GO" id="GO:0097163">
    <property type="term" value="F:sulfur carrier activity"/>
    <property type="evidence" value="ECO:0007669"/>
    <property type="project" value="TreeGrafter"/>
</dbReference>
<dbReference type="GO" id="GO:0016783">
    <property type="term" value="F:sulfurtransferase activity"/>
    <property type="evidence" value="ECO:0007669"/>
    <property type="project" value="UniProtKB-UniRule"/>
</dbReference>
<dbReference type="GO" id="GO:0002143">
    <property type="term" value="P:tRNA wobble position uridine thiolation"/>
    <property type="evidence" value="ECO:0007669"/>
    <property type="project" value="TreeGrafter"/>
</dbReference>
<dbReference type="FunFam" id="3.40.1260.10:FF:000001">
    <property type="entry name" value="Sulfurtransferase TusD"/>
    <property type="match status" value="1"/>
</dbReference>
<dbReference type="Gene3D" id="3.40.1260.10">
    <property type="entry name" value="DsrEFH-like"/>
    <property type="match status" value="1"/>
</dbReference>
<dbReference type="HAMAP" id="MF_00390">
    <property type="entry name" value="Thiourid_synth_D"/>
    <property type="match status" value="1"/>
</dbReference>
<dbReference type="InterPro" id="IPR027396">
    <property type="entry name" value="DsrEFH-like"/>
</dbReference>
<dbReference type="InterPro" id="IPR003787">
    <property type="entry name" value="Sulphur_relay_DsrE/F-like"/>
</dbReference>
<dbReference type="InterPro" id="IPR017463">
    <property type="entry name" value="Sulphur_relay_TusD/DsrE"/>
</dbReference>
<dbReference type="NCBIfam" id="NF001237">
    <property type="entry name" value="PRK00207.1"/>
    <property type="match status" value="1"/>
</dbReference>
<dbReference type="NCBIfam" id="TIGR03012">
    <property type="entry name" value="sulf_tusD_dsrE"/>
    <property type="match status" value="1"/>
</dbReference>
<dbReference type="PANTHER" id="PTHR34874">
    <property type="entry name" value="PROTEIN YCHN"/>
    <property type="match status" value="1"/>
</dbReference>
<dbReference type="PANTHER" id="PTHR34874:SF3">
    <property type="entry name" value="SULFURTRANSFERASE TUSD"/>
    <property type="match status" value="1"/>
</dbReference>
<dbReference type="Pfam" id="PF02635">
    <property type="entry name" value="DsrE"/>
    <property type="match status" value="1"/>
</dbReference>
<dbReference type="SUPFAM" id="SSF75169">
    <property type="entry name" value="DsrEFH-like"/>
    <property type="match status" value="1"/>
</dbReference>
<proteinExistence type="inferred from homology"/>
<gene>
    <name evidence="1" type="primary">tusD</name>
    <name type="ordered locus">BWG_3036</name>
</gene>
<keyword id="KW-0963">Cytoplasm</keyword>
<keyword id="KW-0808">Transferase</keyword>
<keyword id="KW-0819">tRNA processing</keyword>
<organism>
    <name type="scientific">Escherichia coli (strain K12 / MC4100 / BW2952)</name>
    <dbReference type="NCBI Taxonomy" id="595496"/>
    <lineage>
        <taxon>Bacteria</taxon>
        <taxon>Pseudomonadati</taxon>
        <taxon>Pseudomonadota</taxon>
        <taxon>Gammaproteobacteria</taxon>
        <taxon>Enterobacterales</taxon>
        <taxon>Enterobacteriaceae</taxon>
        <taxon>Escherichia</taxon>
    </lineage>
</organism>
<protein>
    <recommendedName>
        <fullName evidence="1">Sulfurtransferase TusD</fullName>
        <ecNumber evidence="1">2.8.1.-</ecNumber>
    </recommendedName>
    <alternativeName>
        <fullName evidence="1">tRNA 2-thiouridine synthesizing protein D</fullName>
    </alternativeName>
</protein>
<reference key="1">
    <citation type="journal article" date="2009" name="J. Bacteriol.">
        <title>Genomic sequencing reveals regulatory mutations and recombinational events in the widely used MC4100 lineage of Escherichia coli K-12.</title>
        <authorList>
            <person name="Ferenci T."/>
            <person name="Zhou Z."/>
            <person name="Betteridge T."/>
            <person name="Ren Y."/>
            <person name="Liu Y."/>
            <person name="Feng L."/>
            <person name="Reeves P.R."/>
            <person name="Wang L."/>
        </authorList>
    </citation>
    <scope>NUCLEOTIDE SEQUENCE [LARGE SCALE GENOMIC DNA]</scope>
    <source>
        <strain>K12 / MC4100 / BW2952</strain>
    </source>
</reference>
<accession>C4ZUK0</accession>
<evidence type="ECO:0000255" key="1">
    <source>
        <dbReference type="HAMAP-Rule" id="MF_00390"/>
    </source>
</evidence>
<comment type="function">
    <text evidence="1">Part of a sulfur-relay system required for 2-thiolation of 5-methylaminomethyl-2-thiouridine (mnm(5)s(2)U) at tRNA wobble positions. Accepts sulfur from TusA and transfers it in turn to TusE.</text>
</comment>
<comment type="subunit">
    <text evidence="1">Heterohexamer, formed by a dimer of trimers. The hexameric TusBCD complex contains 2 copies each of TusB, TusC and TusD. The TusBCD complex interacts with TusE.</text>
</comment>
<comment type="subcellular location">
    <subcellularLocation>
        <location evidence="1">Cytoplasm</location>
    </subcellularLocation>
</comment>
<comment type="similarity">
    <text evidence="1">Belongs to the DsrE/TusD family.</text>
</comment>
<name>TUSD_ECOBW</name>
<feature type="chain" id="PRO_1000205814" description="Sulfurtransferase TusD">
    <location>
        <begin position="1"/>
        <end position="128"/>
    </location>
</feature>
<feature type="active site" description="Cysteine persulfide intermediate" evidence="1">
    <location>
        <position position="78"/>
    </location>
</feature>
<sequence>MRFAIVVTGPAYGTQQASSAFQFAQALIADGHELSSVFFYREGVYNANQLTSPASDEFDLVRAWQQLNAQHGVALNICVAAALRRGVVDETEAGRLGLASSNLQQGFTLSGLGALAEASLTCDRVVQF</sequence>